<sequence length="323" mass="36826">MKPENKIPVLTRLSDEMKAVVNFQQPGLPPWPADGDIETQRQYYLLERRFWNADAPSMTTRTCAVPTPYGDVTTRLYSPQPTSQATLYYLHGGGFILGNLDTHDRIMRLLARYTGCTVIGIDYSLSPQARYPQAIEETVAVCSYFSQHADEYSLNVEKIGFAGDSAGAMLALASALWLRDKHIRCGNVIAILLWYGLYGLQDSVSRRLFGGAWDGLTREDLDMYEKAYLRNDEDRESPWYCLFNNDLTRDVPPCFIASAEFDPLIDDSRLLHQTLQAHQQPCEYKMYPGTLHAFLHYSRMMTIADDALQDGARFFMARMKTPR</sequence>
<name>AES_SALPA</name>
<reference key="1">
    <citation type="journal article" date="2004" name="Nat. Genet.">
        <title>Comparison of genome degradation in Paratyphi A and Typhi, human-restricted serovars of Salmonella enterica that cause typhoid.</title>
        <authorList>
            <person name="McClelland M."/>
            <person name="Sanderson K.E."/>
            <person name="Clifton S.W."/>
            <person name="Latreille P."/>
            <person name="Porwollik S."/>
            <person name="Sabo A."/>
            <person name="Meyer R."/>
            <person name="Bieri T."/>
            <person name="Ozersky P."/>
            <person name="McLellan M."/>
            <person name="Harkins C.R."/>
            <person name="Wang C."/>
            <person name="Nguyen C."/>
            <person name="Berghoff A."/>
            <person name="Elliott G."/>
            <person name="Kohlberg S."/>
            <person name="Strong C."/>
            <person name="Du F."/>
            <person name="Carter J."/>
            <person name="Kremizki C."/>
            <person name="Layman D."/>
            <person name="Leonard S."/>
            <person name="Sun H."/>
            <person name="Fulton L."/>
            <person name="Nash W."/>
            <person name="Miner T."/>
            <person name="Minx P."/>
            <person name="Delehaunty K."/>
            <person name="Fronick C."/>
            <person name="Magrini V."/>
            <person name="Nhan M."/>
            <person name="Warren W."/>
            <person name="Florea L."/>
            <person name="Spieth J."/>
            <person name="Wilson R.K."/>
        </authorList>
    </citation>
    <scope>NUCLEOTIDE SEQUENCE [LARGE SCALE GENOMIC DNA]</scope>
    <source>
        <strain>ATCC 9150 / SARB42</strain>
    </source>
</reference>
<comment type="function">
    <text evidence="2">Displays esterase activity towards short chain fatty esters (acyl chain length of up to 8 carbons). Able to hydrolyze triacetylglycerol (triacetin) and tributyrylglycerol (tributyrin), but not trioleylglycerol (triolein) or cholesterol oleate. Negatively regulates MalT activity by antagonizing maltotriose binding. Inhibits MelA galactosidase activity.</text>
</comment>
<comment type="subunit">
    <text evidence="2">Homodimer. Interacts with MalT and MelA.</text>
</comment>
<comment type="subcellular location">
    <subcellularLocation>
        <location evidence="2">Cytoplasm</location>
    </subcellularLocation>
</comment>
<comment type="similarity">
    <text evidence="2">Belongs to the 'GDXG' lipolytic enzyme family.</text>
</comment>
<feature type="chain" id="PRO_0000239709" description="Acetyl esterase">
    <location>
        <begin position="1"/>
        <end position="323"/>
    </location>
</feature>
<feature type="short sequence motif" description="Involved in the stabilization of the negatively charged intermediate by the formation of the oxyanion hole" evidence="1">
    <location>
        <begin position="91"/>
        <end position="93"/>
    </location>
</feature>
<feature type="active site" evidence="2">
    <location>
        <position position="165"/>
    </location>
</feature>
<feature type="active site" evidence="2">
    <location>
        <position position="262"/>
    </location>
</feature>
<feature type="active site" evidence="2">
    <location>
        <position position="292"/>
    </location>
</feature>
<keyword id="KW-0963">Cytoplasm</keyword>
<keyword id="KW-0378">Hydrolase</keyword>
<keyword id="KW-0719">Serine esterase</keyword>
<protein>
    <recommendedName>
        <fullName evidence="2">Acetyl esterase</fullName>
        <ecNumber evidence="2">3.1.1.-</ecNumber>
    </recommendedName>
</protein>
<accession>Q5PFJ2</accession>
<dbReference type="EC" id="3.1.1.-" evidence="2"/>
<dbReference type="EMBL" id="CP000026">
    <property type="protein sequence ID" value="AAV78118.1"/>
    <property type="molecule type" value="Genomic_DNA"/>
</dbReference>
<dbReference type="RefSeq" id="WP_000801778.1">
    <property type="nucleotide sequence ID" value="NC_006511.1"/>
</dbReference>
<dbReference type="SMR" id="Q5PFJ2"/>
<dbReference type="ESTHER" id="salty-AES">
    <property type="family name" value="Acetyl_esterase"/>
</dbReference>
<dbReference type="KEGG" id="spt:SPA2232"/>
<dbReference type="HOGENOM" id="CLU_012494_6_4_6"/>
<dbReference type="Proteomes" id="UP000008185">
    <property type="component" value="Chromosome"/>
</dbReference>
<dbReference type="GO" id="GO:0005737">
    <property type="term" value="C:cytoplasm"/>
    <property type="evidence" value="ECO:0007669"/>
    <property type="project" value="UniProtKB-SubCell"/>
</dbReference>
<dbReference type="GO" id="GO:0052689">
    <property type="term" value="F:carboxylic ester hydrolase activity"/>
    <property type="evidence" value="ECO:0007669"/>
    <property type="project" value="UniProtKB-UniRule"/>
</dbReference>
<dbReference type="FunFam" id="3.40.50.1820:FF:000035">
    <property type="entry name" value="Acetyl esterase"/>
    <property type="match status" value="1"/>
</dbReference>
<dbReference type="Gene3D" id="3.40.50.1820">
    <property type="entry name" value="alpha/beta hydrolase"/>
    <property type="match status" value="1"/>
</dbReference>
<dbReference type="HAMAP" id="MF_01958">
    <property type="entry name" value="Acetyl_esterase"/>
    <property type="match status" value="1"/>
</dbReference>
<dbReference type="InterPro" id="IPR013094">
    <property type="entry name" value="AB_hydrolase_3"/>
</dbReference>
<dbReference type="InterPro" id="IPR029058">
    <property type="entry name" value="AB_hydrolase_fold"/>
</dbReference>
<dbReference type="InterPro" id="IPR023508">
    <property type="entry name" value="Acetyl_esterase"/>
</dbReference>
<dbReference type="InterPro" id="IPR050300">
    <property type="entry name" value="GDXG_lipolytic_enzyme"/>
</dbReference>
<dbReference type="InterPro" id="IPR033140">
    <property type="entry name" value="Lipase_GDXG_put_SER_AS"/>
</dbReference>
<dbReference type="NCBIfam" id="NF007547">
    <property type="entry name" value="PRK10162.1"/>
    <property type="match status" value="1"/>
</dbReference>
<dbReference type="PANTHER" id="PTHR48081">
    <property type="entry name" value="AB HYDROLASE SUPERFAMILY PROTEIN C4A8.06C"/>
    <property type="match status" value="1"/>
</dbReference>
<dbReference type="PANTHER" id="PTHR48081:SF8">
    <property type="entry name" value="ALPHA_BETA HYDROLASE FOLD-3 DOMAIN-CONTAINING PROTEIN-RELATED"/>
    <property type="match status" value="1"/>
</dbReference>
<dbReference type="Pfam" id="PF07859">
    <property type="entry name" value="Abhydrolase_3"/>
    <property type="match status" value="1"/>
</dbReference>
<dbReference type="SUPFAM" id="SSF53474">
    <property type="entry name" value="alpha/beta-Hydrolases"/>
    <property type="match status" value="1"/>
</dbReference>
<dbReference type="PROSITE" id="PS01174">
    <property type="entry name" value="LIPASE_GDXG_SER"/>
    <property type="match status" value="1"/>
</dbReference>
<evidence type="ECO:0000250" key="1">
    <source>
        <dbReference type="UniProtKB" id="Q5NUF3"/>
    </source>
</evidence>
<evidence type="ECO:0000255" key="2">
    <source>
        <dbReference type="HAMAP-Rule" id="MF_01958"/>
    </source>
</evidence>
<organism>
    <name type="scientific">Salmonella paratyphi A (strain ATCC 9150 / SARB42)</name>
    <dbReference type="NCBI Taxonomy" id="295319"/>
    <lineage>
        <taxon>Bacteria</taxon>
        <taxon>Pseudomonadati</taxon>
        <taxon>Pseudomonadota</taxon>
        <taxon>Gammaproteobacteria</taxon>
        <taxon>Enterobacterales</taxon>
        <taxon>Enterobacteriaceae</taxon>
        <taxon>Salmonella</taxon>
    </lineage>
</organism>
<gene>
    <name evidence="2" type="primary">aes</name>
    <name type="ordered locus">SPA2232</name>
</gene>
<proteinExistence type="inferred from homology"/>